<dbReference type="GO" id="GO:0005576">
    <property type="term" value="C:extracellular region"/>
    <property type="evidence" value="ECO:0007005"/>
    <property type="project" value="UniProtKB"/>
</dbReference>
<dbReference type="GO" id="GO:0007218">
    <property type="term" value="P:neuropeptide signaling pathway"/>
    <property type="evidence" value="ECO:0007669"/>
    <property type="project" value="UniProtKB-KW"/>
</dbReference>
<evidence type="ECO:0000269" key="1">
    <source>
    </source>
</evidence>
<evidence type="ECO:0000303" key="2">
    <source>
    </source>
</evidence>
<evidence type="ECO:0000305" key="3"/>
<sequence>GPSGFLGMR</sequence>
<name>TRP1_NEZVI</name>
<feature type="peptide" id="PRO_0000395644" description="Tachykinin-related peptide 1" evidence="1">
    <location>
        <begin position="1"/>
        <end position="9"/>
    </location>
</feature>
<feature type="modified residue" description="Arginine amide" evidence="1">
    <location>
        <position position="9"/>
    </location>
</feature>
<comment type="subcellular location">
    <subcellularLocation>
        <location evidence="1 3">Secreted</location>
    </subcellularLocation>
</comment>
<comment type="tissue specificity">
    <text evidence="1">Expressed in the antennal lobe (at protein level).</text>
</comment>
<protein>
    <recommendedName>
        <fullName evidence="2">Tachykinin-related peptide 1</fullName>
        <shortName evidence="2">TKRP-1</shortName>
    </recommendedName>
</protein>
<accession>P86575</accession>
<reference evidence="3" key="1">
    <citation type="journal article" date="2009" name="Peptides">
        <title>Neuropeptides in Heteroptera: identification of allatotropin-related peptide and tachykinin-related peptides using MALDI-TOF mass spectrometry.</title>
        <authorList>
            <person name="Neupert S."/>
            <person name="Russell W.K."/>
            <person name="Russell D.H."/>
            <person name="Lopez J.D. Jr."/>
            <person name="Predel R."/>
            <person name="Nachman R.J."/>
        </authorList>
    </citation>
    <scope>PROTEIN SEQUENCE</scope>
    <scope>SUBCELLULAR LOCATION</scope>
    <scope>TISSUE SPECIFICITY</scope>
    <scope>AMIDATION AT ARG-9</scope>
    <source>
        <tissue evidence="1">Antennal lobe</tissue>
    </source>
</reference>
<keyword id="KW-0027">Amidation</keyword>
<keyword id="KW-0903">Direct protein sequencing</keyword>
<keyword id="KW-0527">Neuropeptide</keyword>
<keyword id="KW-0964">Secreted</keyword>
<proteinExistence type="evidence at protein level"/>
<organism>
    <name type="scientific">Nezara viridula</name>
    <name type="common">Southern green stink bug</name>
    <name type="synonym">Cimex viridulus</name>
    <dbReference type="NCBI Taxonomy" id="85310"/>
    <lineage>
        <taxon>Eukaryota</taxon>
        <taxon>Metazoa</taxon>
        <taxon>Ecdysozoa</taxon>
        <taxon>Arthropoda</taxon>
        <taxon>Hexapoda</taxon>
        <taxon>Insecta</taxon>
        <taxon>Pterygota</taxon>
        <taxon>Neoptera</taxon>
        <taxon>Paraneoptera</taxon>
        <taxon>Hemiptera</taxon>
        <taxon>Heteroptera</taxon>
        <taxon>Panheteroptera</taxon>
        <taxon>Pentatomomorpha</taxon>
        <taxon>Pentatomoidea</taxon>
        <taxon>Pentatomidae</taxon>
        <taxon>Pentatominae</taxon>
        <taxon>Nezara</taxon>
    </lineage>
</organism>